<sequence>MTIAITDVVLRDAHQSLFATRLRLDDMLPIAAQLDDVGYGSLECWGGATFDACIRFLGEDPWLRLRELKKAMPKTPLQMLLRGQNLLGYRHYADDVVERFVERAVKNGMDVFRVFDAMNDPRNMKAALQAVRSHGAHAQGTLSYTTSPAHTLQTWLDLTEQLLETGVDSIAIKDMSGILTPMAAFELVSEIKKRFEVRLHLHCHATTGMAEMALLKAIEAGVDGVDTAISSMSATYGHPATEALVATLAGTEHDTGLDILKLENIAAYFREVRKKYHAFEGQLKGYDSRILVAQVPGGMLTNLESQLKQQNAADRLDQVLAEIPRVREDLGFIPLVTPTSQIVGTQAVLNVLTGERYKTIAKETAGILKGEYGHTPVPVNAALQARVLEGSAPVTCRPADLLKPELAELEADVRRQAQEKGITLAGNAIDDVLTVALFPQIGLKFLENRHNPAAFEPLPQAEAAQPVAKAEKPAASGIYTVEVEGKAFVVRVSDGGDISQLTTAVPAASSAPVQAAAPAGAGTPVTAPLAGNIWKVIATEGQSVAEGDVLLILEAMKMETEIRAAQAGTVRGIAVKSGDAVSVGDTLMTLA</sequence>
<keyword id="KW-0092">Biotin</keyword>
<keyword id="KW-0406">Ion transport</keyword>
<keyword id="KW-0915">Sodium</keyword>
<keyword id="KW-0739">Sodium transport</keyword>
<keyword id="KW-1278">Translocase</keyword>
<keyword id="KW-0813">Transport</keyword>
<accession>Q8XGX8</accession>
<accession>Q7CBX2</accession>
<evidence type="ECO:0000250" key="1"/>
<evidence type="ECO:0000255" key="2">
    <source>
        <dbReference type="PROSITE-ProRule" id="PRU01066"/>
    </source>
</evidence>
<evidence type="ECO:0000255" key="3">
    <source>
        <dbReference type="PROSITE-ProRule" id="PRU01151"/>
    </source>
</evidence>
<proteinExistence type="inferred from homology"/>
<reference key="1">
    <citation type="journal article" date="2001" name="Nature">
        <title>Complete genome sequence of a multiple drug resistant Salmonella enterica serovar Typhi CT18.</title>
        <authorList>
            <person name="Parkhill J."/>
            <person name="Dougan G."/>
            <person name="James K.D."/>
            <person name="Thomson N.R."/>
            <person name="Pickard D."/>
            <person name="Wain J."/>
            <person name="Churcher C.M."/>
            <person name="Mungall K.L."/>
            <person name="Bentley S.D."/>
            <person name="Holden M.T.G."/>
            <person name="Sebaihia M."/>
            <person name="Baker S."/>
            <person name="Basham D."/>
            <person name="Brooks K."/>
            <person name="Chillingworth T."/>
            <person name="Connerton P."/>
            <person name="Cronin A."/>
            <person name="Davis P."/>
            <person name="Davies R.M."/>
            <person name="Dowd L."/>
            <person name="White N."/>
            <person name="Farrar J."/>
            <person name="Feltwell T."/>
            <person name="Hamlin N."/>
            <person name="Haque A."/>
            <person name="Hien T.T."/>
            <person name="Holroyd S."/>
            <person name="Jagels K."/>
            <person name="Krogh A."/>
            <person name="Larsen T.S."/>
            <person name="Leather S."/>
            <person name="Moule S."/>
            <person name="O'Gaora P."/>
            <person name="Parry C."/>
            <person name="Quail M.A."/>
            <person name="Rutherford K.M."/>
            <person name="Simmonds M."/>
            <person name="Skelton J."/>
            <person name="Stevens K."/>
            <person name="Whitehead S."/>
            <person name="Barrell B.G."/>
        </authorList>
    </citation>
    <scope>NUCLEOTIDE SEQUENCE [LARGE SCALE GENOMIC DNA]</scope>
    <source>
        <strain>CT18</strain>
    </source>
</reference>
<reference key="2">
    <citation type="journal article" date="2003" name="J. Bacteriol.">
        <title>Comparative genomics of Salmonella enterica serovar Typhi strains Ty2 and CT18.</title>
        <authorList>
            <person name="Deng W."/>
            <person name="Liou S.-R."/>
            <person name="Plunkett G. III"/>
            <person name="Mayhew G.F."/>
            <person name="Rose D.J."/>
            <person name="Burland V."/>
            <person name="Kodoyianni V."/>
            <person name="Schwartz D.C."/>
            <person name="Blattner F.R."/>
        </authorList>
    </citation>
    <scope>NUCLEOTIDE SEQUENCE [LARGE SCALE GENOMIC DNA]</scope>
    <source>
        <strain>ATCC 700931 / Ty2</strain>
    </source>
</reference>
<gene>
    <name type="primary">oadA1</name>
    <name type="synonym">oadA</name>
    <name type="ordered locus">STY0064</name>
    <name type="ordered locus">t0057</name>
</gene>
<gene>
    <name type="primary">oadA2</name>
    <name type="synonym">oadA</name>
    <name type="ordered locus">STY3532</name>
    <name type="ordered locus">t3267</name>
</gene>
<organism>
    <name type="scientific">Salmonella typhi</name>
    <dbReference type="NCBI Taxonomy" id="90370"/>
    <lineage>
        <taxon>Bacteria</taxon>
        <taxon>Pseudomonadati</taxon>
        <taxon>Pseudomonadota</taxon>
        <taxon>Gammaproteobacteria</taxon>
        <taxon>Enterobacterales</taxon>
        <taxon>Enterobacteriaceae</taxon>
        <taxon>Salmonella</taxon>
    </lineage>
</organism>
<feature type="initiator methionine" description="Removed" evidence="1">
    <location>
        <position position="1"/>
    </location>
</feature>
<feature type="chain" id="PRO_0000232701" description="Oxaloacetate decarboxylase alpha chain">
    <location>
        <begin position="2"/>
        <end position="591"/>
    </location>
</feature>
<feature type="domain" description="Pyruvate carboxyltransferase" evidence="3">
    <location>
        <begin position="3"/>
        <end position="263"/>
    </location>
</feature>
<feature type="domain" description="Biotinyl-binding" evidence="2">
    <location>
        <begin position="518"/>
        <end position="591"/>
    </location>
</feature>
<feature type="modified residue" description="N6-biotinyllysine" evidence="1 2">
    <location>
        <position position="557"/>
    </location>
</feature>
<dbReference type="EC" id="7.2.4.2"/>
<dbReference type="EMBL" id="AL513382">
    <property type="protein sequence ID" value="CAD01210.1"/>
    <property type="molecule type" value="Genomic_DNA"/>
</dbReference>
<dbReference type="EMBL" id="AL513382">
    <property type="protein sequence ID" value="CAD07867.1"/>
    <property type="molecule type" value="Genomic_DNA"/>
</dbReference>
<dbReference type="EMBL" id="AE014613">
    <property type="protein sequence ID" value="AAO67790.1"/>
    <property type="molecule type" value="Genomic_DNA"/>
</dbReference>
<dbReference type="EMBL" id="AE014613">
    <property type="protein sequence ID" value="AAO70802.1"/>
    <property type="molecule type" value="Genomic_DNA"/>
</dbReference>
<dbReference type="RefSeq" id="NP_454666.1">
    <property type="nucleotide sequence ID" value="NC_003198.1"/>
</dbReference>
<dbReference type="RefSeq" id="NP_457728.1">
    <property type="nucleotide sequence ID" value="NC_003198.1"/>
</dbReference>
<dbReference type="RefSeq" id="WP_000150450.1">
    <property type="nucleotide sequence ID" value="NZ_WSUR01000074.1"/>
</dbReference>
<dbReference type="SMR" id="Q8XGX8"/>
<dbReference type="STRING" id="220341.gene:17584112"/>
<dbReference type="KEGG" id="stt:t0057"/>
<dbReference type="KEGG" id="stt:t3267"/>
<dbReference type="KEGG" id="sty:STY0064"/>
<dbReference type="KEGG" id="sty:STY3532"/>
<dbReference type="PATRIC" id="fig|220341.7.peg.3596"/>
<dbReference type="eggNOG" id="COG0511">
    <property type="taxonomic scope" value="Bacteria"/>
</dbReference>
<dbReference type="eggNOG" id="COG5016">
    <property type="taxonomic scope" value="Bacteria"/>
</dbReference>
<dbReference type="HOGENOM" id="CLU_000395_4_3_6"/>
<dbReference type="OMA" id="MWQSSGK"/>
<dbReference type="OrthoDB" id="9760256at2"/>
<dbReference type="Proteomes" id="UP000000541">
    <property type="component" value="Chromosome"/>
</dbReference>
<dbReference type="Proteomes" id="UP000002670">
    <property type="component" value="Chromosome"/>
</dbReference>
<dbReference type="GO" id="GO:0005737">
    <property type="term" value="C:cytoplasm"/>
    <property type="evidence" value="ECO:0007669"/>
    <property type="project" value="TreeGrafter"/>
</dbReference>
<dbReference type="GO" id="GO:0015451">
    <property type="term" value="F:decarboxylation-driven active transmembrane transporter activity"/>
    <property type="evidence" value="ECO:0007669"/>
    <property type="project" value="UniProtKB-EC"/>
</dbReference>
<dbReference type="GO" id="GO:0008948">
    <property type="term" value="F:oxaloacetate decarboxylase activity"/>
    <property type="evidence" value="ECO:0007669"/>
    <property type="project" value="InterPro"/>
</dbReference>
<dbReference type="GO" id="GO:0004736">
    <property type="term" value="F:pyruvate carboxylase activity"/>
    <property type="evidence" value="ECO:0007669"/>
    <property type="project" value="UniProtKB-ARBA"/>
</dbReference>
<dbReference type="GO" id="GO:0006094">
    <property type="term" value="P:gluconeogenesis"/>
    <property type="evidence" value="ECO:0007669"/>
    <property type="project" value="TreeGrafter"/>
</dbReference>
<dbReference type="GO" id="GO:0006814">
    <property type="term" value="P:sodium ion transport"/>
    <property type="evidence" value="ECO:0007669"/>
    <property type="project" value="UniProtKB-KW"/>
</dbReference>
<dbReference type="CDD" id="cd06850">
    <property type="entry name" value="biotinyl_domain"/>
    <property type="match status" value="1"/>
</dbReference>
<dbReference type="CDD" id="cd07937">
    <property type="entry name" value="DRE_TIM_PC_TC_5S"/>
    <property type="match status" value="1"/>
</dbReference>
<dbReference type="FunFam" id="2.40.50.100:FF:000003">
    <property type="entry name" value="Acetyl-CoA carboxylase biotin carboxyl carrier protein"/>
    <property type="match status" value="1"/>
</dbReference>
<dbReference type="Gene3D" id="2.40.50.100">
    <property type="match status" value="1"/>
</dbReference>
<dbReference type="Gene3D" id="3.20.20.70">
    <property type="entry name" value="Aldolase class I"/>
    <property type="match status" value="1"/>
</dbReference>
<dbReference type="InterPro" id="IPR013785">
    <property type="entry name" value="Aldolase_TIM"/>
</dbReference>
<dbReference type="InterPro" id="IPR001882">
    <property type="entry name" value="Biotin_BS"/>
</dbReference>
<dbReference type="InterPro" id="IPR000089">
    <property type="entry name" value="Biotin_lipoyl"/>
</dbReference>
<dbReference type="InterPro" id="IPR003379">
    <property type="entry name" value="Carboxylase_cons_dom"/>
</dbReference>
<dbReference type="InterPro" id="IPR005776">
    <property type="entry name" value="OadA"/>
</dbReference>
<dbReference type="InterPro" id="IPR055268">
    <property type="entry name" value="PCB-like"/>
</dbReference>
<dbReference type="InterPro" id="IPR000891">
    <property type="entry name" value="PYR_CT"/>
</dbReference>
<dbReference type="InterPro" id="IPR011053">
    <property type="entry name" value="Single_hybrid_motif"/>
</dbReference>
<dbReference type="NCBIfam" id="TIGR01108">
    <property type="entry name" value="oadA"/>
    <property type="match status" value="1"/>
</dbReference>
<dbReference type="NCBIfam" id="NF006761">
    <property type="entry name" value="PRK09282.1"/>
    <property type="match status" value="1"/>
</dbReference>
<dbReference type="NCBIfam" id="NF010643">
    <property type="entry name" value="PRK14040.1"/>
    <property type="match status" value="1"/>
</dbReference>
<dbReference type="PANTHER" id="PTHR43778">
    <property type="entry name" value="PYRUVATE CARBOXYLASE"/>
    <property type="match status" value="1"/>
</dbReference>
<dbReference type="PANTHER" id="PTHR43778:SF2">
    <property type="entry name" value="PYRUVATE CARBOXYLASE, MITOCHONDRIAL"/>
    <property type="match status" value="1"/>
</dbReference>
<dbReference type="Pfam" id="PF00364">
    <property type="entry name" value="Biotin_lipoyl"/>
    <property type="match status" value="1"/>
</dbReference>
<dbReference type="Pfam" id="PF00682">
    <property type="entry name" value="HMGL-like"/>
    <property type="match status" value="1"/>
</dbReference>
<dbReference type="Pfam" id="PF02436">
    <property type="entry name" value="PYC_OADA"/>
    <property type="match status" value="1"/>
</dbReference>
<dbReference type="SUPFAM" id="SSF51569">
    <property type="entry name" value="Aldolase"/>
    <property type="match status" value="1"/>
</dbReference>
<dbReference type="SUPFAM" id="SSF89000">
    <property type="entry name" value="post-HMGL domain-like"/>
    <property type="match status" value="1"/>
</dbReference>
<dbReference type="SUPFAM" id="SSF51230">
    <property type="entry name" value="Single hybrid motif"/>
    <property type="match status" value="1"/>
</dbReference>
<dbReference type="PROSITE" id="PS00188">
    <property type="entry name" value="BIOTIN"/>
    <property type="match status" value="1"/>
</dbReference>
<dbReference type="PROSITE" id="PS50968">
    <property type="entry name" value="BIOTINYL_LIPOYL"/>
    <property type="match status" value="1"/>
</dbReference>
<dbReference type="PROSITE" id="PS50991">
    <property type="entry name" value="PYR_CT"/>
    <property type="match status" value="1"/>
</dbReference>
<name>DCOA_SALTI</name>
<protein>
    <recommendedName>
        <fullName>Oxaloacetate decarboxylase alpha chain</fullName>
        <ecNumber>7.2.4.2</ecNumber>
    </recommendedName>
</protein>
<comment type="function">
    <text>Catalyzes the decarboxylation of oxaloacetate coupled to Na(+) translocation.</text>
</comment>
<comment type="catalytic activity">
    <reaction>
        <text>oxaloacetate + 2 Na(+)(in) + H(+) = pyruvate + 2 Na(+)(out) + CO2</text>
        <dbReference type="Rhea" id="RHEA:57724"/>
        <dbReference type="ChEBI" id="CHEBI:15361"/>
        <dbReference type="ChEBI" id="CHEBI:15378"/>
        <dbReference type="ChEBI" id="CHEBI:16452"/>
        <dbReference type="ChEBI" id="CHEBI:16526"/>
        <dbReference type="ChEBI" id="CHEBI:29101"/>
        <dbReference type="EC" id="7.2.4.2"/>
    </reaction>
</comment>
<comment type="cofactor">
    <cofactor>
        <name>biotin</name>
        <dbReference type="ChEBI" id="CHEBI:57586"/>
    </cofactor>
</comment>
<comment type="subunit">
    <text>Composed of three chains (alpha, beta, and gamma).</text>
</comment>